<dbReference type="EMBL" id="BA000003">
    <property type="protein sequence ID" value="BAB13197.1"/>
    <property type="molecule type" value="Genomic_DNA"/>
</dbReference>
<dbReference type="RefSeq" id="NP_240311.1">
    <property type="nucleotide sequence ID" value="NC_002528.1"/>
</dbReference>
<dbReference type="RefSeq" id="WP_010896145.1">
    <property type="nucleotide sequence ID" value="NZ_AP036055.1"/>
</dbReference>
<dbReference type="SMR" id="P57571"/>
<dbReference type="STRING" id="563178.BUAP5A_497"/>
<dbReference type="EnsemblBacteria" id="BAB13197">
    <property type="protein sequence ID" value="BAB13197"/>
    <property type="gene ID" value="BAB13197"/>
</dbReference>
<dbReference type="KEGG" id="buc:BU504"/>
<dbReference type="PATRIC" id="fig|107806.10.peg.509"/>
<dbReference type="eggNOG" id="COG0201">
    <property type="taxonomic scope" value="Bacteria"/>
</dbReference>
<dbReference type="HOGENOM" id="CLU_030313_0_2_6"/>
<dbReference type="Proteomes" id="UP000001806">
    <property type="component" value="Chromosome"/>
</dbReference>
<dbReference type="GO" id="GO:0005886">
    <property type="term" value="C:plasma membrane"/>
    <property type="evidence" value="ECO:0007669"/>
    <property type="project" value="UniProtKB-SubCell"/>
</dbReference>
<dbReference type="GO" id="GO:0065002">
    <property type="term" value="P:intracellular protein transmembrane transport"/>
    <property type="evidence" value="ECO:0007669"/>
    <property type="project" value="UniProtKB-UniRule"/>
</dbReference>
<dbReference type="GO" id="GO:0006605">
    <property type="term" value="P:protein targeting"/>
    <property type="evidence" value="ECO:0007669"/>
    <property type="project" value="UniProtKB-UniRule"/>
</dbReference>
<dbReference type="GO" id="GO:0043952">
    <property type="term" value="P:protein transport by the Sec complex"/>
    <property type="evidence" value="ECO:0007669"/>
    <property type="project" value="UniProtKB-UniRule"/>
</dbReference>
<dbReference type="FunFam" id="1.10.3370.10:FF:000001">
    <property type="entry name" value="Preprotein translocase subunit SecY"/>
    <property type="match status" value="1"/>
</dbReference>
<dbReference type="Gene3D" id="1.10.3370.10">
    <property type="entry name" value="SecY subunit domain"/>
    <property type="match status" value="1"/>
</dbReference>
<dbReference type="HAMAP" id="MF_01465">
    <property type="entry name" value="SecY"/>
    <property type="match status" value="1"/>
</dbReference>
<dbReference type="InterPro" id="IPR026593">
    <property type="entry name" value="SecY"/>
</dbReference>
<dbReference type="InterPro" id="IPR002208">
    <property type="entry name" value="SecY/SEC61-alpha"/>
</dbReference>
<dbReference type="InterPro" id="IPR030659">
    <property type="entry name" value="SecY_CS"/>
</dbReference>
<dbReference type="InterPro" id="IPR023201">
    <property type="entry name" value="SecY_dom_sf"/>
</dbReference>
<dbReference type="NCBIfam" id="TIGR00967">
    <property type="entry name" value="3a0501s007"/>
    <property type="match status" value="1"/>
</dbReference>
<dbReference type="PANTHER" id="PTHR10906">
    <property type="entry name" value="SECY/SEC61-ALPHA FAMILY MEMBER"/>
    <property type="match status" value="1"/>
</dbReference>
<dbReference type="Pfam" id="PF00344">
    <property type="entry name" value="SecY"/>
    <property type="match status" value="1"/>
</dbReference>
<dbReference type="PIRSF" id="PIRSF004557">
    <property type="entry name" value="SecY"/>
    <property type="match status" value="1"/>
</dbReference>
<dbReference type="PRINTS" id="PR00303">
    <property type="entry name" value="SECYTRNLCASE"/>
</dbReference>
<dbReference type="SUPFAM" id="SSF103491">
    <property type="entry name" value="Preprotein translocase SecY subunit"/>
    <property type="match status" value="1"/>
</dbReference>
<dbReference type="PROSITE" id="PS00755">
    <property type="entry name" value="SECY_1"/>
    <property type="match status" value="1"/>
</dbReference>
<dbReference type="PROSITE" id="PS00756">
    <property type="entry name" value="SECY_2"/>
    <property type="match status" value="1"/>
</dbReference>
<feature type="chain" id="PRO_0000131713" description="Protein translocase subunit SecY">
    <location>
        <begin position="1"/>
        <end position="437"/>
    </location>
</feature>
<feature type="transmembrane region" description="Helical" evidence="1">
    <location>
        <begin position="23"/>
        <end position="43"/>
    </location>
</feature>
<feature type="transmembrane region" description="Helical" evidence="1">
    <location>
        <begin position="77"/>
        <end position="97"/>
    </location>
</feature>
<feature type="transmembrane region" description="Helical" evidence="1">
    <location>
        <begin position="125"/>
        <end position="145"/>
    </location>
</feature>
<feature type="transmembrane region" description="Helical" evidence="1">
    <location>
        <begin position="154"/>
        <end position="174"/>
    </location>
</feature>
<feature type="transmembrane region" description="Helical" evidence="1">
    <location>
        <begin position="183"/>
        <end position="203"/>
    </location>
</feature>
<feature type="transmembrane region" description="Helical" evidence="1">
    <location>
        <begin position="217"/>
        <end position="237"/>
    </location>
</feature>
<feature type="transmembrane region" description="Helical" evidence="1">
    <location>
        <begin position="271"/>
        <end position="291"/>
    </location>
</feature>
<feature type="transmembrane region" description="Helical" evidence="1">
    <location>
        <begin position="315"/>
        <end position="335"/>
    </location>
</feature>
<feature type="transmembrane region" description="Helical" evidence="1">
    <location>
        <begin position="367"/>
        <end position="387"/>
    </location>
</feature>
<feature type="transmembrane region" description="Helical" evidence="1">
    <location>
        <begin position="395"/>
        <end position="415"/>
    </location>
</feature>
<gene>
    <name evidence="1" type="primary">secY</name>
    <name type="ordered locus">BU504</name>
</gene>
<sequence>MVKKLGLNFKNTKTSVSELKQRIVFLIVAIIVFRIGSFIPIPGIDTTILSKILNNQNGTIVDMFNMFSGGALSRASIFALGIMPYISASIIIQLLTLVYPTLSEIKKEGESGRHRINQYTRYATLILALVQSIGIAMTLPNIAGIRSIIINTDFYFYLIAIISLVTSTMFLMWLGELITEYGIGNGISIIIFIGIIAGLPSAIGNTIEKTRQGDLHILLFLFILLLIFSVIFLVVFMERGQRKIVVHYAQRQQGRRIYETPSTHLPLKINMAGVIPAIFASSIVLFPATIISWCKVNHEWLTKILFYLQPNQFLYLILYISAIVFFCFFYTGLVFNPRETADNLKKSGAFISGIRPGEQTAKYINKIMLRLTLVGSLYITFICLIPEFMRSAMNVPFYFGGTSLLIVVVVIIDFITQIQTLIMSNQYESMLKKANLN</sequence>
<comment type="function">
    <text evidence="1">The central subunit of the protein translocation channel SecYEG. Consists of two halves formed by TMs 1-5 and 6-10. These two domains form a lateral gate at the front which open onto the bilayer between TMs 2 and 7, and are clamped together by SecE at the back. The channel is closed by both a pore ring composed of hydrophobic SecY resides and a short helix (helix 2A) on the extracellular side of the membrane which forms a plug. The plug probably moves laterally to allow the channel to open. The ring and the pore may move independently.</text>
</comment>
<comment type="subunit">
    <text evidence="1">Component of the Sec protein translocase complex. Heterotrimer consisting of SecY, SecE and SecG subunits. The heterotrimers can form oligomers, although 1 heterotrimer is thought to be able to translocate proteins. Interacts with the ribosome. Interacts with SecDF, and other proteins may be involved. Interacts with SecA.</text>
</comment>
<comment type="subcellular location">
    <subcellularLocation>
        <location evidence="1">Cell membrane</location>
        <topology evidence="1">Multi-pass membrane protein</topology>
    </subcellularLocation>
</comment>
<comment type="similarity">
    <text evidence="1">Belongs to the SecY/SEC61-alpha family.</text>
</comment>
<name>SECY_BUCAI</name>
<evidence type="ECO:0000255" key="1">
    <source>
        <dbReference type="HAMAP-Rule" id="MF_01465"/>
    </source>
</evidence>
<protein>
    <recommendedName>
        <fullName evidence="1">Protein translocase subunit SecY</fullName>
    </recommendedName>
</protein>
<keyword id="KW-1003">Cell membrane</keyword>
<keyword id="KW-0472">Membrane</keyword>
<keyword id="KW-0653">Protein transport</keyword>
<keyword id="KW-1185">Reference proteome</keyword>
<keyword id="KW-0811">Translocation</keyword>
<keyword id="KW-0812">Transmembrane</keyword>
<keyword id="KW-1133">Transmembrane helix</keyword>
<keyword id="KW-0813">Transport</keyword>
<proteinExistence type="inferred from homology"/>
<organism>
    <name type="scientific">Buchnera aphidicola subsp. Acyrthosiphon pisum (strain APS)</name>
    <name type="common">Acyrthosiphon pisum symbiotic bacterium</name>
    <dbReference type="NCBI Taxonomy" id="107806"/>
    <lineage>
        <taxon>Bacteria</taxon>
        <taxon>Pseudomonadati</taxon>
        <taxon>Pseudomonadota</taxon>
        <taxon>Gammaproteobacteria</taxon>
        <taxon>Enterobacterales</taxon>
        <taxon>Erwiniaceae</taxon>
        <taxon>Buchnera</taxon>
    </lineage>
</organism>
<reference key="1">
    <citation type="journal article" date="2000" name="Nature">
        <title>Genome sequence of the endocellular bacterial symbiont of aphids Buchnera sp. APS.</title>
        <authorList>
            <person name="Shigenobu S."/>
            <person name="Watanabe H."/>
            <person name="Hattori M."/>
            <person name="Sakaki Y."/>
            <person name="Ishikawa H."/>
        </authorList>
    </citation>
    <scope>NUCLEOTIDE SEQUENCE [LARGE SCALE GENOMIC DNA]</scope>
    <source>
        <strain>APS</strain>
    </source>
</reference>
<accession>P57571</accession>